<sequence length="51" mass="6008">MREKIKLESSAGTGHFYTTTKNKRANPEKLELKKFDPVARKHVMYKETKLK</sequence>
<accession>Q0AHY2</accession>
<protein>
    <recommendedName>
        <fullName evidence="1">Large ribosomal subunit protein bL33</fullName>
    </recommendedName>
    <alternativeName>
        <fullName evidence="3">50S ribosomal protein L33</fullName>
    </alternativeName>
</protein>
<comment type="similarity">
    <text evidence="1">Belongs to the bacterial ribosomal protein bL33 family.</text>
</comment>
<evidence type="ECO:0000255" key="1">
    <source>
        <dbReference type="HAMAP-Rule" id="MF_00294"/>
    </source>
</evidence>
<evidence type="ECO:0000256" key="2">
    <source>
        <dbReference type="SAM" id="MobiDB-lite"/>
    </source>
</evidence>
<evidence type="ECO:0000305" key="3"/>
<keyword id="KW-0687">Ribonucleoprotein</keyword>
<keyword id="KW-0689">Ribosomal protein</keyword>
<gene>
    <name evidence="1" type="primary">rpmG</name>
    <name type="ordered locus">Neut_0780</name>
</gene>
<reference key="1">
    <citation type="journal article" date="2007" name="Environ. Microbiol.">
        <title>Whole-genome analysis of the ammonia-oxidizing bacterium, Nitrosomonas eutropha C91: implications for niche adaptation.</title>
        <authorList>
            <person name="Stein L.Y."/>
            <person name="Arp D.J."/>
            <person name="Berube P.M."/>
            <person name="Chain P.S."/>
            <person name="Hauser L."/>
            <person name="Jetten M.S."/>
            <person name="Klotz M.G."/>
            <person name="Larimer F.W."/>
            <person name="Norton J.M."/>
            <person name="Op den Camp H.J.M."/>
            <person name="Shin M."/>
            <person name="Wei X."/>
        </authorList>
    </citation>
    <scope>NUCLEOTIDE SEQUENCE [LARGE SCALE GENOMIC DNA]</scope>
    <source>
        <strain>DSM 101675 / C91 / Nm57</strain>
    </source>
</reference>
<organism>
    <name type="scientific">Nitrosomonas eutropha (strain DSM 101675 / C91 / Nm57)</name>
    <dbReference type="NCBI Taxonomy" id="335283"/>
    <lineage>
        <taxon>Bacteria</taxon>
        <taxon>Pseudomonadati</taxon>
        <taxon>Pseudomonadota</taxon>
        <taxon>Betaproteobacteria</taxon>
        <taxon>Nitrosomonadales</taxon>
        <taxon>Nitrosomonadaceae</taxon>
        <taxon>Nitrosomonas</taxon>
    </lineage>
</organism>
<proteinExistence type="inferred from homology"/>
<name>RL33_NITEC</name>
<feature type="chain" id="PRO_0000356590" description="Large ribosomal subunit protein bL33">
    <location>
        <begin position="1"/>
        <end position="51"/>
    </location>
</feature>
<feature type="region of interest" description="Disordered" evidence="2">
    <location>
        <begin position="1"/>
        <end position="23"/>
    </location>
</feature>
<feature type="compositionally biased region" description="Polar residues" evidence="2">
    <location>
        <begin position="10"/>
        <end position="20"/>
    </location>
</feature>
<dbReference type="EMBL" id="CP000450">
    <property type="protein sequence ID" value="ABI59050.1"/>
    <property type="molecule type" value="Genomic_DNA"/>
</dbReference>
<dbReference type="RefSeq" id="WP_011633875.1">
    <property type="nucleotide sequence ID" value="NC_008344.1"/>
</dbReference>
<dbReference type="SMR" id="Q0AHY2"/>
<dbReference type="STRING" id="335283.Neut_0780"/>
<dbReference type="KEGG" id="net:Neut_0780"/>
<dbReference type="eggNOG" id="COG0267">
    <property type="taxonomic scope" value="Bacteria"/>
</dbReference>
<dbReference type="HOGENOM" id="CLU_190949_1_1_4"/>
<dbReference type="OrthoDB" id="21586at2"/>
<dbReference type="Proteomes" id="UP000001966">
    <property type="component" value="Chromosome"/>
</dbReference>
<dbReference type="GO" id="GO:0022625">
    <property type="term" value="C:cytosolic large ribosomal subunit"/>
    <property type="evidence" value="ECO:0007669"/>
    <property type="project" value="TreeGrafter"/>
</dbReference>
<dbReference type="GO" id="GO:0003735">
    <property type="term" value="F:structural constituent of ribosome"/>
    <property type="evidence" value="ECO:0007669"/>
    <property type="project" value="InterPro"/>
</dbReference>
<dbReference type="GO" id="GO:0006412">
    <property type="term" value="P:translation"/>
    <property type="evidence" value="ECO:0007669"/>
    <property type="project" value="UniProtKB-UniRule"/>
</dbReference>
<dbReference type="FunFam" id="2.20.28.120:FF:000001">
    <property type="entry name" value="50S ribosomal protein L33"/>
    <property type="match status" value="1"/>
</dbReference>
<dbReference type="Gene3D" id="2.20.28.120">
    <property type="entry name" value="Ribosomal protein L33"/>
    <property type="match status" value="1"/>
</dbReference>
<dbReference type="HAMAP" id="MF_00294">
    <property type="entry name" value="Ribosomal_bL33"/>
    <property type="match status" value="1"/>
</dbReference>
<dbReference type="InterPro" id="IPR001705">
    <property type="entry name" value="Ribosomal_bL33"/>
</dbReference>
<dbReference type="InterPro" id="IPR018264">
    <property type="entry name" value="Ribosomal_bL33_CS"/>
</dbReference>
<dbReference type="InterPro" id="IPR038584">
    <property type="entry name" value="Ribosomal_bL33_sf"/>
</dbReference>
<dbReference type="InterPro" id="IPR011332">
    <property type="entry name" value="Ribosomal_zn-bd"/>
</dbReference>
<dbReference type="NCBIfam" id="NF001764">
    <property type="entry name" value="PRK00504.1"/>
    <property type="match status" value="1"/>
</dbReference>
<dbReference type="NCBIfam" id="NF001860">
    <property type="entry name" value="PRK00595.1"/>
    <property type="match status" value="1"/>
</dbReference>
<dbReference type="NCBIfam" id="TIGR01023">
    <property type="entry name" value="rpmG_bact"/>
    <property type="match status" value="1"/>
</dbReference>
<dbReference type="PANTHER" id="PTHR15238">
    <property type="entry name" value="54S RIBOSOMAL PROTEIN L39, MITOCHONDRIAL"/>
    <property type="match status" value="1"/>
</dbReference>
<dbReference type="PANTHER" id="PTHR15238:SF1">
    <property type="entry name" value="LARGE RIBOSOMAL SUBUNIT PROTEIN BL33M"/>
    <property type="match status" value="1"/>
</dbReference>
<dbReference type="Pfam" id="PF00471">
    <property type="entry name" value="Ribosomal_L33"/>
    <property type="match status" value="1"/>
</dbReference>
<dbReference type="SUPFAM" id="SSF57829">
    <property type="entry name" value="Zn-binding ribosomal proteins"/>
    <property type="match status" value="1"/>
</dbReference>
<dbReference type="PROSITE" id="PS00582">
    <property type="entry name" value="RIBOSOMAL_L33"/>
    <property type="match status" value="1"/>
</dbReference>